<gene>
    <name evidence="1" type="primary">argG</name>
    <name type="ordered locus">SSO0638</name>
</gene>
<feature type="chain" id="PRO_0000148686" description="Argininosuccinate synthase">
    <location>
        <begin position="1"/>
        <end position="391"/>
    </location>
</feature>
<feature type="binding site" evidence="1">
    <location>
        <begin position="6"/>
        <end position="14"/>
    </location>
    <ligand>
        <name>ATP</name>
        <dbReference type="ChEBI" id="CHEBI:30616"/>
    </ligand>
</feature>
<feature type="binding site" evidence="1">
    <location>
        <position position="84"/>
    </location>
    <ligand>
        <name>L-citrulline</name>
        <dbReference type="ChEBI" id="CHEBI:57743"/>
    </ligand>
</feature>
<feature type="binding site" evidence="1">
    <location>
        <position position="114"/>
    </location>
    <ligand>
        <name>ATP</name>
        <dbReference type="ChEBI" id="CHEBI:30616"/>
    </ligand>
</feature>
<feature type="binding site" evidence="1">
    <location>
        <position position="116"/>
    </location>
    <ligand>
        <name>L-aspartate</name>
        <dbReference type="ChEBI" id="CHEBI:29991"/>
    </ligand>
</feature>
<feature type="binding site" evidence="1">
    <location>
        <position position="120"/>
    </location>
    <ligand>
        <name>L-aspartate</name>
        <dbReference type="ChEBI" id="CHEBI:29991"/>
    </ligand>
</feature>
<feature type="binding site" evidence="1">
    <location>
        <position position="120"/>
    </location>
    <ligand>
        <name>L-citrulline</name>
        <dbReference type="ChEBI" id="CHEBI:57743"/>
    </ligand>
</feature>
<feature type="binding site" evidence="1">
    <location>
        <position position="121"/>
    </location>
    <ligand>
        <name>L-aspartate</name>
        <dbReference type="ChEBI" id="CHEBI:29991"/>
    </ligand>
</feature>
<feature type="binding site" evidence="1">
    <location>
        <position position="124"/>
    </location>
    <ligand>
        <name>L-citrulline</name>
        <dbReference type="ChEBI" id="CHEBI:57743"/>
    </ligand>
</feature>
<feature type="binding site" evidence="1">
    <location>
        <position position="171"/>
    </location>
    <ligand>
        <name>L-citrulline</name>
        <dbReference type="ChEBI" id="CHEBI:57743"/>
    </ligand>
</feature>
<feature type="binding site" evidence="1">
    <location>
        <position position="180"/>
    </location>
    <ligand>
        <name>L-citrulline</name>
        <dbReference type="ChEBI" id="CHEBI:57743"/>
    </ligand>
</feature>
<feature type="binding site" evidence="1">
    <location>
        <position position="253"/>
    </location>
    <ligand>
        <name>L-citrulline</name>
        <dbReference type="ChEBI" id="CHEBI:57743"/>
    </ligand>
</feature>
<feature type="binding site" evidence="1">
    <location>
        <position position="265"/>
    </location>
    <ligand>
        <name>L-citrulline</name>
        <dbReference type="ChEBI" id="CHEBI:57743"/>
    </ligand>
</feature>
<proteinExistence type="inferred from homology"/>
<name>ASSY_SACS2</name>
<reference key="1">
    <citation type="journal article" date="2000" name="Genome">
        <title>Gene content and organization of a 281-kbp contig from the genome of the extremely thermophilic archaeon, Sulfolobus solfataricus P2.</title>
        <authorList>
            <person name="Charlebois R.L."/>
            <person name="Singh R.K."/>
            <person name="Chan-Weiher C.C.-Y."/>
            <person name="Allard G."/>
            <person name="Chow C."/>
            <person name="Confalonieri F."/>
            <person name="Curtis B."/>
            <person name="Duguet M."/>
            <person name="Erauso G."/>
            <person name="Faguy D."/>
            <person name="Gaasterland T."/>
            <person name="Garrett R.A."/>
            <person name="Gordon P."/>
            <person name="Jeffries A.C."/>
            <person name="Kozera C."/>
            <person name="Kushwaha N."/>
            <person name="Lafleur E."/>
            <person name="Medina N."/>
            <person name="Peng X."/>
            <person name="Penny S.L."/>
            <person name="She Q."/>
            <person name="St Jean A."/>
            <person name="van der Oost J."/>
            <person name="Young F."/>
            <person name="Zivanovic Y."/>
            <person name="Doolittle W.F."/>
            <person name="Ragan M.A."/>
            <person name="Sensen C.W."/>
        </authorList>
    </citation>
    <scope>NUCLEOTIDE SEQUENCE [LARGE SCALE GENOMIC DNA]</scope>
    <source>
        <strain>ATCC 35092 / DSM 1617 / JCM 11322 / P2</strain>
    </source>
</reference>
<reference key="2">
    <citation type="journal article" date="2001" name="Proc. Natl. Acad. Sci. U.S.A.">
        <title>The complete genome of the crenarchaeon Sulfolobus solfataricus P2.</title>
        <authorList>
            <person name="She Q."/>
            <person name="Singh R.K."/>
            <person name="Confalonieri F."/>
            <person name="Zivanovic Y."/>
            <person name="Allard G."/>
            <person name="Awayez M.J."/>
            <person name="Chan-Weiher C.C.-Y."/>
            <person name="Clausen I.G."/>
            <person name="Curtis B.A."/>
            <person name="De Moors A."/>
            <person name="Erauso G."/>
            <person name="Fletcher C."/>
            <person name="Gordon P.M.K."/>
            <person name="Heikamp-de Jong I."/>
            <person name="Jeffries A.C."/>
            <person name="Kozera C.J."/>
            <person name="Medina N."/>
            <person name="Peng X."/>
            <person name="Thi-Ngoc H.P."/>
            <person name="Redder P."/>
            <person name="Schenk M.E."/>
            <person name="Theriault C."/>
            <person name="Tolstrup N."/>
            <person name="Charlebois R.L."/>
            <person name="Doolittle W.F."/>
            <person name="Duguet M."/>
            <person name="Gaasterland T."/>
            <person name="Garrett R.A."/>
            <person name="Ragan M.A."/>
            <person name="Sensen C.W."/>
            <person name="Van der Oost J."/>
        </authorList>
    </citation>
    <scope>NUCLEOTIDE SEQUENCE [LARGE SCALE GENOMIC DNA]</scope>
    <source>
        <strain>ATCC 35092 / DSM 1617 / JCM 11322 / P2</strain>
    </source>
</reference>
<keyword id="KW-0028">Amino-acid biosynthesis</keyword>
<keyword id="KW-0055">Arginine biosynthesis</keyword>
<keyword id="KW-0067">ATP-binding</keyword>
<keyword id="KW-0963">Cytoplasm</keyword>
<keyword id="KW-0436">Ligase</keyword>
<keyword id="KW-0547">Nucleotide-binding</keyword>
<keyword id="KW-1185">Reference proteome</keyword>
<evidence type="ECO:0000255" key="1">
    <source>
        <dbReference type="HAMAP-Rule" id="MF_00005"/>
    </source>
</evidence>
<evidence type="ECO:0000305" key="2"/>
<sequence length="391" mass="44487">MKIVLAYSGGLDTTVSIRWLKETFKAEIITVTVDVGQKDDFKKIEERAYIAGASKHYTIDAVRQFANNYIAYAIKLNGLYEGVYPLSTALARPLIAEKVVEVAKKEGAEAVAHGSTSKGNDQVRFDLAVKALYPDVKIIAPARIWNMTREDEIKYAKEKGIPIKVESDKYSIDENLWGRSIEGDIISDPSLEVPEDAFEWTKQIYNKKEIVSIEFSNGVPTAVNGEKMELNKLVDFLNLKFGSHGFGRVEHIENRVVGFKSREVYEVPAALGLIYAHIDLEKTIYTPMELRFKRHIDQLWSDLVYQGLWFEPLRETLHKVADEMNKWISGEAKVEVSNGSFRIVGRESEYSPYSEKIASYNKGWYPSDEMARGFIEIWGMHSLIARRVRGL</sequence>
<protein>
    <recommendedName>
        <fullName evidence="1">Argininosuccinate synthase</fullName>
        <ecNumber evidence="1">6.3.4.5</ecNumber>
    </recommendedName>
    <alternativeName>
        <fullName evidence="1">Citrulline--aspartate ligase</fullName>
    </alternativeName>
</protein>
<dbReference type="EC" id="6.3.4.5" evidence="1"/>
<dbReference type="EMBL" id="Y18930">
    <property type="protein sequence ID" value="CAB57663.1"/>
    <property type="status" value="ALT_INIT"/>
    <property type="molecule type" value="Genomic_DNA"/>
</dbReference>
<dbReference type="EMBL" id="AE006641">
    <property type="protein sequence ID" value="AAK40946.1"/>
    <property type="status" value="ALT_INIT"/>
    <property type="molecule type" value="Genomic_DNA"/>
</dbReference>
<dbReference type="PIR" id="C90211">
    <property type="entry name" value="C90211"/>
</dbReference>
<dbReference type="SMR" id="Q9UX31"/>
<dbReference type="FunCoup" id="Q9UX31">
    <property type="interactions" value="270"/>
</dbReference>
<dbReference type="STRING" id="273057.SSO0638"/>
<dbReference type="PaxDb" id="273057-SSO0638"/>
<dbReference type="EnsemblBacteria" id="AAK40946">
    <property type="protein sequence ID" value="AAK40946"/>
    <property type="gene ID" value="SSO0638"/>
</dbReference>
<dbReference type="KEGG" id="sso:SSO0638"/>
<dbReference type="PATRIC" id="fig|273057.12.peg.643"/>
<dbReference type="eggNOG" id="arCOG00112">
    <property type="taxonomic scope" value="Archaea"/>
</dbReference>
<dbReference type="HOGENOM" id="CLU_032784_4_0_2"/>
<dbReference type="InParanoid" id="Q9UX31"/>
<dbReference type="PhylomeDB" id="Q9UX31"/>
<dbReference type="UniPathway" id="UPA00068">
    <property type="reaction ID" value="UER00113"/>
</dbReference>
<dbReference type="Proteomes" id="UP000001974">
    <property type="component" value="Chromosome"/>
</dbReference>
<dbReference type="GO" id="GO:0005737">
    <property type="term" value="C:cytoplasm"/>
    <property type="evidence" value="ECO:0000318"/>
    <property type="project" value="GO_Central"/>
</dbReference>
<dbReference type="GO" id="GO:0004055">
    <property type="term" value="F:argininosuccinate synthase activity"/>
    <property type="evidence" value="ECO:0000318"/>
    <property type="project" value="GO_Central"/>
</dbReference>
<dbReference type="GO" id="GO:0005524">
    <property type="term" value="F:ATP binding"/>
    <property type="evidence" value="ECO:0007669"/>
    <property type="project" value="UniProtKB-UniRule"/>
</dbReference>
<dbReference type="GO" id="GO:0000053">
    <property type="term" value="P:argininosuccinate metabolic process"/>
    <property type="evidence" value="ECO:0000318"/>
    <property type="project" value="GO_Central"/>
</dbReference>
<dbReference type="GO" id="GO:0006526">
    <property type="term" value="P:L-arginine biosynthetic process"/>
    <property type="evidence" value="ECO:0000318"/>
    <property type="project" value="GO_Central"/>
</dbReference>
<dbReference type="GO" id="GO:0000050">
    <property type="term" value="P:urea cycle"/>
    <property type="evidence" value="ECO:0000318"/>
    <property type="project" value="GO_Central"/>
</dbReference>
<dbReference type="CDD" id="cd01999">
    <property type="entry name" value="ASS"/>
    <property type="match status" value="1"/>
</dbReference>
<dbReference type="FunFam" id="3.40.50.620:FF:000019">
    <property type="entry name" value="Argininosuccinate synthase"/>
    <property type="match status" value="1"/>
</dbReference>
<dbReference type="FunFam" id="3.90.1260.10:FF:000007">
    <property type="entry name" value="Argininosuccinate synthase"/>
    <property type="match status" value="1"/>
</dbReference>
<dbReference type="Gene3D" id="3.90.1260.10">
    <property type="entry name" value="Argininosuccinate synthetase, chain A, domain 2"/>
    <property type="match status" value="1"/>
</dbReference>
<dbReference type="Gene3D" id="3.40.50.620">
    <property type="entry name" value="HUPs"/>
    <property type="match status" value="1"/>
</dbReference>
<dbReference type="HAMAP" id="MF_00005">
    <property type="entry name" value="Arg_succ_synth_type1"/>
    <property type="match status" value="1"/>
</dbReference>
<dbReference type="InterPro" id="IPR048268">
    <property type="entry name" value="Arginosuc_syn_C"/>
</dbReference>
<dbReference type="InterPro" id="IPR048267">
    <property type="entry name" value="Arginosuc_syn_N"/>
</dbReference>
<dbReference type="InterPro" id="IPR001518">
    <property type="entry name" value="Arginosuc_synth"/>
</dbReference>
<dbReference type="InterPro" id="IPR018223">
    <property type="entry name" value="Arginosuc_synth_CS"/>
</dbReference>
<dbReference type="InterPro" id="IPR023434">
    <property type="entry name" value="Arginosuc_synth_type_1_subfam"/>
</dbReference>
<dbReference type="InterPro" id="IPR024074">
    <property type="entry name" value="AS_cat/multimer_dom_body"/>
</dbReference>
<dbReference type="InterPro" id="IPR014729">
    <property type="entry name" value="Rossmann-like_a/b/a_fold"/>
</dbReference>
<dbReference type="NCBIfam" id="TIGR00032">
    <property type="entry name" value="argG"/>
    <property type="match status" value="1"/>
</dbReference>
<dbReference type="NCBIfam" id="NF001770">
    <property type="entry name" value="PRK00509.1"/>
    <property type="match status" value="1"/>
</dbReference>
<dbReference type="PANTHER" id="PTHR11587">
    <property type="entry name" value="ARGININOSUCCINATE SYNTHASE"/>
    <property type="match status" value="1"/>
</dbReference>
<dbReference type="PANTHER" id="PTHR11587:SF2">
    <property type="entry name" value="ARGININOSUCCINATE SYNTHASE"/>
    <property type="match status" value="1"/>
</dbReference>
<dbReference type="Pfam" id="PF20979">
    <property type="entry name" value="Arginosuc_syn_C"/>
    <property type="match status" value="1"/>
</dbReference>
<dbReference type="Pfam" id="PF00764">
    <property type="entry name" value="Arginosuc_synth"/>
    <property type="match status" value="1"/>
</dbReference>
<dbReference type="SUPFAM" id="SSF52402">
    <property type="entry name" value="Adenine nucleotide alpha hydrolases-like"/>
    <property type="match status" value="1"/>
</dbReference>
<dbReference type="SUPFAM" id="SSF69864">
    <property type="entry name" value="Argininosuccinate synthetase, C-terminal domain"/>
    <property type="match status" value="1"/>
</dbReference>
<dbReference type="PROSITE" id="PS00564">
    <property type="entry name" value="ARGININOSUCCIN_SYN_1"/>
    <property type="match status" value="1"/>
</dbReference>
<dbReference type="PROSITE" id="PS00565">
    <property type="entry name" value="ARGININOSUCCIN_SYN_2"/>
    <property type="match status" value="1"/>
</dbReference>
<accession>Q9UX31</accession>
<organism>
    <name type="scientific">Saccharolobus solfataricus (strain ATCC 35092 / DSM 1617 / JCM 11322 / P2)</name>
    <name type="common">Sulfolobus solfataricus</name>
    <dbReference type="NCBI Taxonomy" id="273057"/>
    <lineage>
        <taxon>Archaea</taxon>
        <taxon>Thermoproteota</taxon>
        <taxon>Thermoprotei</taxon>
        <taxon>Sulfolobales</taxon>
        <taxon>Sulfolobaceae</taxon>
        <taxon>Saccharolobus</taxon>
    </lineage>
</organism>
<comment type="catalytic activity">
    <reaction evidence="1">
        <text>L-citrulline + L-aspartate + ATP = 2-(N(omega)-L-arginino)succinate + AMP + diphosphate + H(+)</text>
        <dbReference type="Rhea" id="RHEA:10932"/>
        <dbReference type="ChEBI" id="CHEBI:15378"/>
        <dbReference type="ChEBI" id="CHEBI:29991"/>
        <dbReference type="ChEBI" id="CHEBI:30616"/>
        <dbReference type="ChEBI" id="CHEBI:33019"/>
        <dbReference type="ChEBI" id="CHEBI:57472"/>
        <dbReference type="ChEBI" id="CHEBI:57743"/>
        <dbReference type="ChEBI" id="CHEBI:456215"/>
        <dbReference type="EC" id="6.3.4.5"/>
    </reaction>
</comment>
<comment type="pathway">
    <text evidence="1">Amino-acid biosynthesis; L-arginine biosynthesis; L-arginine from L-ornithine and carbamoyl phosphate: step 2/3.</text>
</comment>
<comment type="subunit">
    <text evidence="1">Homotetramer.</text>
</comment>
<comment type="subcellular location">
    <subcellularLocation>
        <location evidence="1">Cytoplasm</location>
    </subcellularLocation>
</comment>
<comment type="similarity">
    <text evidence="1">Belongs to the argininosuccinate synthase family. Type 1 subfamily.</text>
</comment>
<comment type="sequence caution" evidence="2">
    <conflict type="erroneous initiation">
        <sequence resource="EMBL-CDS" id="AAK40946"/>
    </conflict>
</comment>
<comment type="sequence caution" evidence="2">
    <conflict type="erroneous initiation">
        <sequence resource="EMBL-CDS" id="CAB57663"/>
    </conflict>
</comment>